<organism>
    <name type="scientific">Rickettsia massiliae (strain Mtu5)</name>
    <dbReference type="NCBI Taxonomy" id="416276"/>
    <lineage>
        <taxon>Bacteria</taxon>
        <taxon>Pseudomonadati</taxon>
        <taxon>Pseudomonadota</taxon>
        <taxon>Alphaproteobacteria</taxon>
        <taxon>Rickettsiales</taxon>
        <taxon>Rickettsiaceae</taxon>
        <taxon>Rickettsieae</taxon>
        <taxon>Rickettsia</taxon>
        <taxon>spotted fever group</taxon>
    </lineage>
</organism>
<proteinExistence type="inferred from homology"/>
<protein>
    <recommendedName>
        <fullName evidence="1">Large ribosomal subunit protein uL11</fullName>
    </recommendedName>
    <alternativeName>
        <fullName evidence="2">50S ribosomal protein L11</fullName>
    </alternativeName>
</protein>
<keyword id="KW-0488">Methylation</keyword>
<keyword id="KW-0687">Ribonucleoprotein</keyword>
<keyword id="KW-0689">Ribosomal protein</keyword>
<keyword id="KW-0694">RNA-binding</keyword>
<keyword id="KW-0699">rRNA-binding</keyword>
<reference key="1">
    <citation type="journal article" date="2007" name="Genome Res.">
        <title>Lateral gene transfer between obligate intracellular bacteria: evidence from the Rickettsia massiliae genome.</title>
        <authorList>
            <person name="Blanc G."/>
            <person name="Ogata H."/>
            <person name="Robert C."/>
            <person name="Audic S."/>
            <person name="Claverie J.-M."/>
            <person name="Raoult D."/>
        </authorList>
    </citation>
    <scope>NUCLEOTIDE SEQUENCE [LARGE SCALE GENOMIC DNA]</scope>
    <source>
        <strain>Mtu5</strain>
    </source>
</reference>
<sequence length="145" mass="15345">MSQKAIKGYINLIIPATGATPAPPIGPALGQRKVNIAAFCKDFNDATQGMEKGIPLPTVITVYEDSSFSFKIKTPPASYFLKKYAKITKGSSATKKEAVVGKVTMDDCCEIAKLKMPDLNTKNIEAATKIICGSAASMGLEVVGN</sequence>
<gene>
    <name evidence="1" type="primary">rplK</name>
    <name type="ordered locus">RMA_0185</name>
</gene>
<comment type="function">
    <text evidence="1">Forms part of the ribosomal stalk which helps the ribosome interact with GTP-bound translation factors.</text>
</comment>
<comment type="subunit">
    <text evidence="1">Part of the ribosomal stalk of the 50S ribosomal subunit. Interacts with L10 and the large rRNA to form the base of the stalk. L10 forms an elongated spine to which L12 dimers bind in a sequential fashion forming a multimeric L10(L12)X complex.</text>
</comment>
<comment type="PTM">
    <text evidence="1">One or more lysine residues are methylated.</text>
</comment>
<comment type="similarity">
    <text evidence="1">Belongs to the universal ribosomal protein uL11 family.</text>
</comment>
<dbReference type="EMBL" id="CP000683">
    <property type="protein sequence ID" value="ABV84479.1"/>
    <property type="molecule type" value="Genomic_DNA"/>
</dbReference>
<dbReference type="RefSeq" id="WP_012152457.1">
    <property type="nucleotide sequence ID" value="NC_009900.1"/>
</dbReference>
<dbReference type="SMR" id="A8F0P3"/>
<dbReference type="KEGG" id="rms:RMA_0185"/>
<dbReference type="HOGENOM" id="CLU_074237_2_0_5"/>
<dbReference type="Proteomes" id="UP000001311">
    <property type="component" value="Chromosome"/>
</dbReference>
<dbReference type="GO" id="GO:0022625">
    <property type="term" value="C:cytosolic large ribosomal subunit"/>
    <property type="evidence" value="ECO:0007669"/>
    <property type="project" value="TreeGrafter"/>
</dbReference>
<dbReference type="GO" id="GO:0070180">
    <property type="term" value="F:large ribosomal subunit rRNA binding"/>
    <property type="evidence" value="ECO:0007669"/>
    <property type="project" value="UniProtKB-UniRule"/>
</dbReference>
<dbReference type="GO" id="GO:0003735">
    <property type="term" value="F:structural constituent of ribosome"/>
    <property type="evidence" value="ECO:0007669"/>
    <property type="project" value="InterPro"/>
</dbReference>
<dbReference type="GO" id="GO:0006412">
    <property type="term" value="P:translation"/>
    <property type="evidence" value="ECO:0007669"/>
    <property type="project" value="UniProtKB-UniRule"/>
</dbReference>
<dbReference type="CDD" id="cd00349">
    <property type="entry name" value="Ribosomal_L11"/>
    <property type="match status" value="1"/>
</dbReference>
<dbReference type="FunFam" id="3.30.1550.10:FF:000005">
    <property type="entry name" value="50S ribosomal protein L11"/>
    <property type="match status" value="1"/>
</dbReference>
<dbReference type="Gene3D" id="1.10.10.250">
    <property type="entry name" value="Ribosomal protein L11, C-terminal domain"/>
    <property type="match status" value="1"/>
</dbReference>
<dbReference type="Gene3D" id="3.30.1550.10">
    <property type="entry name" value="Ribosomal protein L11/L12, N-terminal domain"/>
    <property type="match status" value="1"/>
</dbReference>
<dbReference type="HAMAP" id="MF_00736">
    <property type="entry name" value="Ribosomal_uL11"/>
    <property type="match status" value="1"/>
</dbReference>
<dbReference type="InterPro" id="IPR000911">
    <property type="entry name" value="Ribosomal_uL11"/>
</dbReference>
<dbReference type="InterPro" id="IPR006519">
    <property type="entry name" value="Ribosomal_uL11_bac-typ"/>
</dbReference>
<dbReference type="InterPro" id="IPR020783">
    <property type="entry name" value="Ribosomal_uL11_C"/>
</dbReference>
<dbReference type="InterPro" id="IPR036769">
    <property type="entry name" value="Ribosomal_uL11_C_sf"/>
</dbReference>
<dbReference type="InterPro" id="IPR020785">
    <property type="entry name" value="Ribosomal_uL11_CS"/>
</dbReference>
<dbReference type="InterPro" id="IPR020784">
    <property type="entry name" value="Ribosomal_uL11_N"/>
</dbReference>
<dbReference type="InterPro" id="IPR036796">
    <property type="entry name" value="Ribosomal_uL11_N_sf"/>
</dbReference>
<dbReference type="NCBIfam" id="TIGR01632">
    <property type="entry name" value="L11_bact"/>
    <property type="match status" value="1"/>
</dbReference>
<dbReference type="PANTHER" id="PTHR11661">
    <property type="entry name" value="60S RIBOSOMAL PROTEIN L12"/>
    <property type="match status" value="1"/>
</dbReference>
<dbReference type="PANTHER" id="PTHR11661:SF1">
    <property type="entry name" value="LARGE RIBOSOMAL SUBUNIT PROTEIN UL11M"/>
    <property type="match status" value="1"/>
</dbReference>
<dbReference type="Pfam" id="PF00298">
    <property type="entry name" value="Ribosomal_L11"/>
    <property type="match status" value="1"/>
</dbReference>
<dbReference type="Pfam" id="PF03946">
    <property type="entry name" value="Ribosomal_L11_N"/>
    <property type="match status" value="1"/>
</dbReference>
<dbReference type="SMART" id="SM00649">
    <property type="entry name" value="RL11"/>
    <property type="match status" value="1"/>
</dbReference>
<dbReference type="SUPFAM" id="SSF54747">
    <property type="entry name" value="Ribosomal L11/L12e N-terminal domain"/>
    <property type="match status" value="1"/>
</dbReference>
<dbReference type="SUPFAM" id="SSF46906">
    <property type="entry name" value="Ribosomal protein L11, C-terminal domain"/>
    <property type="match status" value="1"/>
</dbReference>
<dbReference type="PROSITE" id="PS00359">
    <property type="entry name" value="RIBOSOMAL_L11"/>
    <property type="match status" value="1"/>
</dbReference>
<evidence type="ECO:0000255" key="1">
    <source>
        <dbReference type="HAMAP-Rule" id="MF_00736"/>
    </source>
</evidence>
<evidence type="ECO:0000305" key="2"/>
<feature type="chain" id="PRO_1000062139" description="Large ribosomal subunit protein uL11">
    <location>
        <begin position="1"/>
        <end position="145"/>
    </location>
</feature>
<name>RL11_RICM5</name>
<accession>A8F0P3</accession>